<evidence type="ECO:0000250" key="1">
    <source>
        <dbReference type="UniProtKB" id="Q5K6N0"/>
    </source>
</evidence>
<evidence type="ECO:0000255" key="2"/>
<evidence type="ECO:0000256" key="3">
    <source>
        <dbReference type="SAM" id="MobiDB-lite"/>
    </source>
</evidence>
<evidence type="ECO:0000305" key="4"/>
<comment type="function">
    <text evidence="1">Plays a critical role for male fertility and sperm motility by regulating sperm cytoplasm removal and maintaining axoneme integrity.</text>
</comment>
<comment type="subcellular location">
    <subcellularLocation>
        <location evidence="4">Membrane</location>
        <topology evidence="4">Single-pass membrane protein</topology>
    </subcellularLocation>
</comment>
<name>TM232_RAT</name>
<accession>B1WBT0</accession>
<protein>
    <recommendedName>
        <fullName>Transmembrane protein 232</fullName>
    </recommendedName>
</protein>
<gene>
    <name type="primary">Tmem232</name>
</gene>
<reference key="1">
    <citation type="journal article" date="2004" name="Genome Res.">
        <title>The status, quality, and expansion of the NIH full-length cDNA project: the Mammalian Gene Collection (MGC).</title>
        <authorList>
            <consortium name="The MGC Project Team"/>
        </authorList>
    </citation>
    <scope>NUCLEOTIDE SEQUENCE [LARGE SCALE MRNA]</scope>
    <source>
        <tissue>Testis</tissue>
    </source>
</reference>
<sequence length="617" mass="71914">MASKKWPSFSVTKEFILRFNNTDNRVKEEELLEQARKFTVRCKRKLGLKTLGSGKHVHLPTAWAEVIYLAQCKGEIQDEALNMLYASLDHVSFDCDQLPTLFFLAESVLYRLCCDAFKKEYLYSVEIKLVKIGYLIFLRLFVFFLHGHLENFKQHLLRLQPYLYALYYSEPSYYKYPNILSSLQFILKTAEIICKRELHFEVFESLREVEDPFSDTNHVQLNKRGYEVNHLLWHSVAAWSCVQDNRPQLNAVLDHILFHKAQLQTKCWLDSALALLVLGEAAKLNMACLKTLMDLMTHFLLSPQSQEDYCSIYDIPWASDIVFIYTSIIAEVCLYAATSDLRKTALIGFCVCKDPQQDIHLTNKSEEMPELDGASILTLLKYFSSRISDNCAKVIWVGYYGIVYNLVKMSWELQGDEEQDGFRNMVWQTLQKIKDYEEDPRIQNAVTIAQAELNDAADPFSSKAAPNSEAFSKYIGWRIANTLSRLFFPSLDVSALPQKTPVETDLQRKHTISKRQPEKKGVVRIVMKEHPSVLELSMFPYPDFFTKADKKLEEVIDHHWQKDMETLKQIEAVCEAQNRKDEEEKEKIRFQEIMKQRERKLNKQTKPYEITPSEKKE</sequence>
<organism>
    <name type="scientific">Rattus norvegicus</name>
    <name type="common">Rat</name>
    <dbReference type="NCBI Taxonomy" id="10116"/>
    <lineage>
        <taxon>Eukaryota</taxon>
        <taxon>Metazoa</taxon>
        <taxon>Chordata</taxon>
        <taxon>Craniata</taxon>
        <taxon>Vertebrata</taxon>
        <taxon>Euteleostomi</taxon>
        <taxon>Mammalia</taxon>
        <taxon>Eutheria</taxon>
        <taxon>Euarchontoglires</taxon>
        <taxon>Glires</taxon>
        <taxon>Rodentia</taxon>
        <taxon>Myomorpha</taxon>
        <taxon>Muroidea</taxon>
        <taxon>Muridae</taxon>
        <taxon>Murinae</taxon>
        <taxon>Rattus</taxon>
    </lineage>
</organism>
<proteinExistence type="evidence at transcript level"/>
<feature type="chain" id="PRO_0000395037" description="Transmembrane protein 232">
    <location>
        <begin position="1"/>
        <end position="617"/>
    </location>
</feature>
<feature type="transmembrane region" description="Helical" evidence="2">
    <location>
        <begin position="129"/>
        <end position="149"/>
    </location>
</feature>
<feature type="region of interest" description="Disordered" evidence="3">
    <location>
        <begin position="598"/>
        <end position="617"/>
    </location>
</feature>
<feature type="coiled-coil region" evidence="2">
    <location>
        <begin position="567"/>
        <end position="604"/>
    </location>
</feature>
<dbReference type="EMBL" id="BC161875">
    <property type="protein sequence ID" value="AAI61875.1"/>
    <property type="molecule type" value="mRNA"/>
</dbReference>
<dbReference type="RefSeq" id="NP_001257319.1">
    <property type="nucleotide sequence ID" value="NM_001270390.2"/>
</dbReference>
<dbReference type="SMR" id="B1WBT0"/>
<dbReference type="FunCoup" id="B1WBT0">
    <property type="interactions" value="276"/>
</dbReference>
<dbReference type="STRING" id="10116.ENSRNOP00000035365"/>
<dbReference type="PhosphoSitePlus" id="B1WBT0"/>
<dbReference type="PaxDb" id="10116-ENSRNOP00000035365"/>
<dbReference type="Ensembl" id="ENSRNOT00000093974.1">
    <property type="protein sequence ID" value="ENSRNOP00000092536.1"/>
    <property type="gene ID" value="ENSRNOG00000031348.5"/>
</dbReference>
<dbReference type="GeneID" id="501199"/>
<dbReference type="KEGG" id="rno:501199"/>
<dbReference type="AGR" id="RGD:1559548"/>
<dbReference type="CTD" id="642987"/>
<dbReference type="RGD" id="1559548">
    <property type="gene designation" value="Tmem232"/>
</dbReference>
<dbReference type="eggNOG" id="ENOG502QVVE">
    <property type="taxonomic scope" value="Eukaryota"/>
</dbReference>
<dbReference type="GeneTree" id="ENSGT00390000014003"/>
<dbReference type="HOGENOM" id="CLU_015366_1_0_1"/>
<dbReference type="InParanoid" id="B1WBT0"/>
<dbReference type="OrthoDB" id="39396at9989"/>
<dbReference type="PhylomeDB" id="B1WBT0"/>
<dbReference type="TreeFam" id="TF336968"/>
<dbReference type="PRO" id="PR:B1WBT0"/>
<dbReference type="Proteomes" id="UP000002494">
    <property type="component" value="Chromosome 9"/>
</dbReference>
<dbReference type="GO" id="GO:0016020">
    <property type="term" value="C:membrane"/>
    <property type="evidence" value="ECO:0007669"/>
    <property type="project" value="UniProtKB-SubCell"/>
</dbReference>
<dbReference type="GO" id="GO:0001520">
    <property type="term" value="C:outer dense fiber"/>
    <property type="evidence" value="ECO:0000266"/>
    <property type="project" value="RGD"/>
</dbReference>
<dbReference type="GO" id="GO:0030030">
    <property type="term" value="P:cell projection organization"/>
    <property type="evidence" value="ECO:0007669"/>
    <property type="project" value="UniProtKB-KW"/>
</dbReference>
<dbReference type="GO" id="GO:0030317">
    <property type="term" value="P:flagellated sperm motility"/>
    <property type="evidence" value="ECO:0000250"/>
    <property type="project" value="UniProtKB"/>
</dbReference>
<dbReference type="GO" id="GO:0098544">
    <property type="term" value="P:maintenance of protein complex location"/>
    <property type="evidence" value="ECO:0000266"/>
    <property type="project" value="RGD"/>
</dbReference>
<dbReference type="GO" id="GO:0160087">
    <property type="term" value="P:spermatid cytoplasm removal during spermiation of flagellated sperm"/>
    <property type="evidence" value="ECO:0000266"/>
    <property type="project" value="RGD"/>
</dbReference>
<dbReference type="GO" id="GO:0007283">
    <property type="term" value="P:spermatogenesis"/>
    <property type="evidence" value="ECO:0000250"/>
    <property type="project" value="UniProtKB"/>
</dbReference>
<dbReference type="InterPro" id="IPR031747">
    <property type="entry name" value="TMEM232"/>
</dbReference>
<dbReference type="PANTHER" id="PTHR28651">
    <property type="entry name" value="TRANSMEMBRANE PROTEIN 232"/>
    <property type="match status" value="1"/>
</dbReference>
<dbReference type="PANTHER" id="PTHR28651:SF1">
    <property type="entry name" value="TRANSMEMBRANE PROTEIN 232"/>
    <property type="match status" value="1"/>
</dbReference>
<dbReference type="Pfam" id="PF15877">
    <property type="entry name" value="TMEM232"/>
    <property type="match status" value="1"/>
</dbReference>
<keyword id="KW-0970">Cilium biogenesis/degradation</keyword>
<keyword id="KW-0175">Coiled coil</keyword>
<keyword id="KW-0472">Membrane</keyword>
<keyword id="KW-1185">Reference proteome</keyword>
<keyword id="KW-0812">Transmembrane</keyword>
<keyword id="KW-1133">Transmembrane helix</keyword>